<reference key="1">
    <citation type="submission" date="2007-02" db="EMBL/GenBank/DDBJ databases">
        <title>Complete sequence of chromosome of Yersinia pestis Pestoides F.</title>
        <authorList>
            <consortium name="US DOE Joint Genome Institute"/>
            <person name="Copeland A."/>
            <person name="Lucas S."/>
            <person name="Lapidus A."/>
            <person name="Barry K."/>
            <person name="Detter J.C."/>
            <person name="Glavina del Rio T."/>
            <person name="Hammon N."/>
            <person name="Israni S."/>
            <person name="Dalin E."/>
            <person name="Tice H."/>
            <person name="Pitluck S."/>
            <person name="Di Bartolo G."/>
            <person name="Chain P."/>
            <person name="Malfatti S."/>
            <person name="Shin M."/>
            <person name="Vergez L."/>
            <person name="Schmutz J."/>
            <person name="Larimer F."/>
            <person name="Land M."/>
            <person name="Hauser L."/>
            <person name="Worsham P."/>
            <person name="Chu M."/>
            <person name="Bearden S."/>
            <person name="Garcia E."/>
            <person name="Richardson P."/>
        </authorList>
    </citation>
    <scope>NUCLEOTIDE SEQUENCE [LARGE SCALE GENOMIC DNA]</scope>
    <source>
        <strain>Pestoides F</strain>
    </source>
</reference>
<name>RL16_YERPP</name>
<accession>A4TGZ9</accession>
<gene>
    <name evidence="1" type="primary">rplP</name>
    <name type="ordered locus">YPDSF_0140</name>
</gene>
<comment type="function">
    <text evidence="1">Binds 23S rRNA and is also seen to make contacts with the A and possibly P site tRNAs.</text>
</comment>
<comment type="subunit">
    <text evidence="1">Part of the 50S ribosomal subunit.</text>
</comment>
<comment type="similarity">
    <text evidence="1">Belongs to the universal ribosomal protein uL16 family.</text>
</comment>
<keyword id="KW-0687">Ribonucleoprotein</keyword>
<keyword id="KW-0689">Ribosomal protein</keyword>
<keyword id="KW-0694">RNA-binding</keyword>
<keyword id="KW-0699">rRNA-binding</keyword>
<keyword id="KW-0820">tRNA-binding</keyword>
<feature type="chain" id="PRO_1000054735" description="Large ribosomal subunit protein uL16">
    <location>
        <begin position="1"/>
        <end position="136"/>
    </location>
</feature>
<proteinExistence type="inferred from homology"/>
<dbReference type="EMBL" id="CP000668">
    <property type="protein sequence ID" value="ABP38562.1"/>
    <property type="molecule type" value="Genomic_DNA"/>
</dbReference>
<dbReference type="RefSeq" id="WP_002218940.1">
    <property type="nucleotide sequence ID" value="NZ_CP009715.1"/>
</dbReference>
<dbReference type="SMR" id="A4TGZ9"/>
<dbReference type="GeneID" id="97454238"/>
<dbReference type="KEGG" id="ypp:YPDSF_0140"/>
<dbReference type="PATRIC" id="fig|386656.14.peg.427"/>
<dbReference type="GO" id="GO:0022625">
    <property type="term" value="C:cytosolic large ribosomal subunit"/>
    <property type="evidence" value="ECO:0007669"/>
    <property type="project" value="TreeGrafter"/>
</dbReference>
<dbReference type="GO" id="GO:0019843">
    <property type="term" value="F:rRNA binding"/>
    <property type="evidence" value="ECO:0007669"/>
    <property type="project" value="UniProtKB-UniRule"/>
</dbReference>
<dbReference type="GO" id="GO:0003735">
    <property type="term" value="F:structural constituent of ribosome"/>
    <property type="evidence" value="ECO:0007669"/>
    <property type="project" value="InterPro"/>
</dbReference>
<dbReference type="GO" id="GO:0000049">
    <property type="term" value="F:tRNA binding"/>
    <property type="evidence" value="ECO:0007669"/>
    <property type="project" value="UniProtKB-KW"/>
</dbReference>
<dbReference type="GO" id="GO:0006412">
    <property type="term" value="P:translation"/>
    <property type="evidence" value="ECO:0007669"/>
    <property type="project" value="UniProtKB-UniRule"/>
</dbReference>
<dbReference type="CDD" id="cd01433">
    <property type="entry name" value="Ribosomal_L16_L10e"/>
    <property type="match status" value="1"/>
</dbReference>
<dbReference type="FunFam" id="3.90.1170.10:FF:000001">
    <property type="entry name" value="50S ribosomal protein L16"/>
    <property type="match status" value="1"/>
</dbReference>
<dbReference type="Gene3D" id="3.90.1170.10">
    <property type="entry name" value="Ribosomal protein L10e/L16"/>
    <property type="match status" value="1"/>
</dbReference>
<dbReference type="HAMAP" id="MF_01342">
    <property type="entry name" value="Ribosomal_uL16"/>
    <property type="match status" value="1"/>
</dbReference>
<dbReference type="InterPro" id="IPR047873">
    <property type="entry name" value="Ribosomal_uL16"/>
</dbReference>
<dbReference type="InterPro" id="IPR000114">
    <property type="entry name" value="Ribosomal_uL16_bact-type"/>
</dbReference>
<dbReference type="InterPro" id="IPR020798">
    <property type="entry name" value="Ribosomal_uL16_CS"/>
</dbReference>
<dbReference type="InterPro" id="IPR016180">
    <property type="entry name" value="Ribosomal_uL16_dom"/>
</dbReference>
<dbReference type="InterPro" id="IPR036920">
    <property type="entry name" value="Ribosomal_uL16_sf"/>
</dbReference>
<dbReference type="NCBIfam" id="TIGR01164">
    <property type="entry name" value="rplP_bact"/>
    <property type="match status" value="1"/>
</dbReference>
<dbReference type="PANTHER" id="PTHR12220">
    <property type="entry name" value="50S/60S RIBOSOMAL PROTEIN L16"/>
    <property type="match status" value="1"/>
</dbReference>
<dbReference type="PANTHER" id="PTHR12220:SF13">
    <property type="entry name" value="LARGE RIBOSOMAL SUBUNIT PROTEIN UL16M"/>
    <property type="match status" value="1"/>
</dbReference>
<dbReference type="Pfam" id="PF00252">
    <property type="entry name" value="Ribosomal_L16"/>
    <property type="match status" value="1"/>
</dbReference>
<dbReference type="PRINTS" id="PR00060">
    <property type="entry name" value="RIBOSOMALL16"/>
</dbReference>
<dbReference type="SUPFAM" id="SSF54686">
    <property type="entry name" value="Ribosomal protein L16p/L10e"/>
    <property type="match status" value="1"/>
</dbReference>
<dbReference type="PROSITE" id="PS00586">
    <property type="entry name" value="RIBOSOMAL_L16_1"/>
    <property type="match status" value="1"/>
</dbReference>
<dbReference type="PROSITE" id="PS00701">
    <property type="entry name" value="RIBOSOMAL_L16_2"/>
    <property type="match status" value="1"/>
</dbReference>
<protein>
    <recommendedName>
        <fullName evidence="1">Large ribosomal subunit protein uL16</fullName>
    </recommendedName>
    <alternativeName>
        <fullName evidence="2">50S ribosomal protein L16</fullName>
    </alternativeName>
</protein>
<sequence length="136" mass="15274">MLQPKRTKFRKMHKGRNRGLAQGTDVSFGEFGLKACGRCRLTARQIEAARRAMTRAIKRQGKVWIRVFPDKPITEKPLEVRMGKGKGNVEYWVALIQPGKVLFEMAGVPEETAREAFKLAAAKLPVGTTFVTKTVM</sequence>
<evidence type="ECO:0000255" key="1">
    <source>
        <dbReference type="HAMAP-Rule" id="MF_01342"/>
    </source>
</evidence>
<evidence type="ECO:0000305" key="2"/>
<organism>
    <name type="scientific">Yersinia pestis (strain Pestoides F)</name>
    <dbReference type="NCBI Taxonomy" id="386656"/>
    <lineage>
        <taxon>Bacteria</taxon>
        <taxon>Pseudomonadati</taxon>
        <taxon>Pseudomonadota</taxon>
        <taxon>Gammaproteobacteria</taxon>
        <taxon>Enterobacterales</taxon>
        <taxon>Yersiniaceae</taxon>
        <taxon>Yersinia</taxon>
    </lineage>
</organism>